<protein>
    <recommendedName>
        <fullName>BON1-associated protein 1</fullName>
    </recommendedName>
</protein>
<name>BAP1_ARATH</name>
<feature type="chain" id="PRO_0000399505" description="BON1-associated protein 1">
    <location>
        <begin position="1"/>
        <end position="192"/>
    </location>
</feature>
<feature type="domain" description="C2" evidence="1">
    <location>
        <begin position="1"/>
        <end position="119"/>
    </location>
</feature>
<organism>
    <name type="scientific">Arabidopsis thaliana</name>
    <name type="common">Mouse-ear cress</name>
    <dbReference type="NCBI Taxonomy" id="3702"/>
    <lineage>
        <taxon>Eukaryota</taxon>
        <taxon>Viridiplantae</taxon>
        <taxon>Streptophyta</taxon>
        <taxon>Embryophyta</taxon>
        <taxon>Tracheophyta</taxon>
        <taxon>Spermatophyta</taxon>
        <taxon>Magnoliopsida</taxon>
        <taxon>eudicotyledons</taxon>
        <taxon>Gunneridae</taxon>
        <taxon>Pentapetalae</taxon>
        <taxon>rosids</taxon>
        <taxon>malvids</taxon>
        <taxon>Brassicales</taxon>
        <taxon>Brassicaceae</taxon>
        <taxon>Camelineae</taxon>
        <taxon>Arabidopsis</taxon>
    </lineage>
</organism>
<keyword id="KW-0025">Alternative splicing</keyword>
<keyword id="KW-0472">Membrane</keyword>
<keyword id="KW-0611">Plant defense</keyword>
<keyword id="KW-1185">Reference proteome</keyword>
<accession>Q941L2</accession>
<accession>Q8LBT3</accession>
<accession>Q9M2E5</accession>
<comment type="function">
    <text evidence="3 4">Negative regulator of cell death and defense responses. Exhibits calcium-dependent phospholipid binding properties.</text>
</comment>
<comment type="subunit">
    <text evidence="2 3 4 5">Interacts with BON1 (via VWA domain), BON2 and BON3.</text>
</comment>
<comment type="interaction">
    <interactant intactId="EBI-1606302">
        <id>Q941L2</id>
    </interactant>
    <interactant intactId="EBI-1606334">
        <id>Q5S1W2</id>
        <label>BON2</label>
    </interactant>
    <organismsDiffer>false</organismsDiffer>
    <experiments>3</experiments>
</comment>
<comment type="subcellular location">
    <subcellularLocation>
        <location evidence="3">Membrane</location>
        <topology evidence="3">Peripheral membrane protein</topology>
    </subcellularLocation>
</comment>
<comment type="alternative products">
    <event type="alternative splicing"/>
    <isoform>
        <id>Q941L2-1</id>
        <name>1</name>
        <sequence type="displayed"/>
    </isoform>
    <text>A number of isoforms are produced. According to EST sequences.</text>
</comment>
<comment type="tissue specificity">
    <text evidence="2">Expressed in roots, leaves, stems and flowers.</text>
</comment>
<comment type="induction">
    <text evidence="2 3 4">Down-regulated by high temperature. Up-regulated by salicylic acid, AgNO(3), chitin, cycloheximide, ozone, syringolin, salt stress and upon pathogen or nematode infection.</text>
</comment>
<comment type="disruption phenotype">
    <text evidence="3 4">Dwarf, twisted leaves and enhanced disease resistance to bacterial and oomycete pathogens in cv. Columbia when grown under constant loght at 22 degrees Celsius. No visible phenotype when grown at 28 degrees Celsius. Accelerated hypersensitive response (HR). Bap1 and bap2 double mutant is seedling lethal.</text>
</comment>
<comment type="miscellaneous">
    <text>Overexpression of BAP1 can suppress a defect in BON1 and confers more susceptibility to virulent pathogens.</text>
</comment>
<comment type="sequence caution" evidence="6">
    <conflict type="erroneous initiation">
        <sequence resource="EMBL-CDS" id="AAM64568"/>
    </conflict>
    <text>Truncated N-terminus.</text>
</comment>
<comment type="sequence caution" evidence="6">
    <conflict type="erroneous initiation">
        <sequence resource="EMBL-CDS" id="CAB71049"/>
    </conflict>
    <text>Truncated N-terminus.</text>
</comment>
<evidence type="ECO:0000255" key="1">
    <source>
        <dbReference type="PROSITE-ProRule" id="PRU00041"/>
    </source>
</evidence>
<evidence type="ECO:0000269" key="2">
    <source>
    </source>
</evidence>
<evidence type="ECO:0000269" key="3">
    <source>
    </source>
</evidence>
<evidence type="ECO:0000269" key="4">
    <source>
    </source>
</evidence>
<evidence type="ECO:0000269" key="5">
    <source>
    </source>
</evidence>
<evidence type="ECO:0000305" key="6"/>
<proteinExistence type="evidence at protein level"/>
<dbReference type="EMBL" id="AY045765">
    <property type="protein sequence ID" value="AAK98798.1"/>
    <property type="molecule type" value="mRNA"/>
</dbReference>
<dbReference type="EMBL" id="AL137898">
    <property type="protein sequence ID" value="CAB71049.1"/>
    <property type="status" value="ALT_INIT"/>
    <property type="molecule type" value="Genomic_DNA"/>
</dbReference>
<dbReference type="EMBL" id="CP002686">
    <property type="protein sequence ID" value="AEE80170.1"/>
    <property type="molecule type" value="Genomic_DNA"/>
</dbReference>
<dbReference type="EMBL" id="CP002686">
    <property type="protein sequence ID" value="AEE80171.2"/>
    <property type="molecule type" value="Genomic_DNA"/>
</dbReference>
<dbReference type="EMBL" id="AK117234">
    <property type="protein sequence ID" value="BAC41910.1"/>
    <property type="molecule type" value="mRNA"/>
</dbReference>
<dbReference type="EMBL" id="BT003727">
    <property type="protein sequence ID" value="AAO39955.1"/>
    <property type="molecule type" value="mRNA"/>
</dbReference>
<dbReference type="EMBL" id="AY087007">
    <property type="protein sequence ID" value="AAM64568.1"/>
    <property type="status" value="ALT_INIT"/>
    <property type="molecule type" value="mRNA"/>
</dbReference>
<dbReference type="PIR" id="T47911">
    <property type="entry name" value="T47911"/>
</dbReference>
<dbReference type="RefSeq" id="NP_001190150.2">
    <molecule id="Q941L2-1"/>
    <property type="nucleotide sequence ID" value="NM_001203221.2"/>
</dbReference>
<dbReference type="RefSeq" id="NP_567111.1">
    <molecule id="Q941L2-1"/>
    <property type="nucleotide sequence ID" value="NM_115983.3"/>
</dbReference>
<dbReference type="SMR" id="Q941L2"/>
<dbReference type="BioGRID" id="10605">
    <property type="interactions" value="2"/>
</dbReference>
<dbReference type="FunCoup" id="Q941L2">
    <property type="interactions" value="165"/>
</dbReference>
<dbReference type="IntAct" id="Q941L2">
    <property type="interactions" value="3"/>
</dbReference>
<dbReference type="STRING" id="3702.Q941L2"/>
<dbReference type="PaxDb" id="3702-AT3G61190.1"/>
<dbReference type="EnsemblPlants" id="AT3G61190.1">
    <molecule id="Q941L2-1"/>
    <property type="protein sequence ID" value="AT3G61190.1"/>
    <property type="gene ID" value="AT3G61190"/>
</dbReference>
<dbReference type="EnsemblPlants" id="AT3G61190.2">
    <molecule id="Q941L2-1"/>
    <property type="protein sequence ID" value="AT3G61190.2"/>
    <property type="gene ID" value="AT3G61190"/>
</dbReference>
<dbReference type="GeneID" id="825291"/>
<dbReference type="Gramene" id="AT3G61190.1">
    <molecule id="Q941L2-1"/>
    <property type="protein sequence ID" value="AT3G61190.1"/>
    <property type="gene ID" value="AT3G61190"/>
</dbReference>
<dbReference type="Gramene" id="AT3G61190.2">
    <molecule id="Q941L2-1"/>
    <property type="protein sequence ID" value="AT3G61190.2"/>
    <property type="gene ID" value="AT3G61190"/>
</dbReference>
<dbReference type="KEGG" id="ath:AT3G61190"/>
<dbReference type="Araport" id="AT3G61190"/>
<dbReference type="TAIR" id="AT3G61190">
    <property type="gene designation" value="BAP1"/>
</dbReference>
<dbReference type="eggNOG" id="ENOG502SU1K">
    <property type="taxonomic scope" value="Eukaryota"/>
</dbReference>
<dbReference type="InParanoid" id="Q941L2"/>
<dbReference type="OMA" id="RDYGACS"/>
<dbReference type="PhylomeDB" id="Q941L2"/>
<dbReference type="PRO" id="PR:Q941L2"/>
<dbReference type="Proteomes" id="UP000006548">
    <property type="component" value="Chromosome 3"/>
</dbReference>
<dbReference type="ExpressionAtlas" id="Q941L2">
    <property type="expression patterns" value="baseline and differential"/>
</dbReference>
<dbReference type="GO" id="GO:0016020">
    <property type="term" value="C:membrane"/>
    <property type="evidence" value="ECO:0000314"/>
    <property type="project" value="TAIR"/>
</dbReference>
<dbReference type="GO" id="GO:0005543">
    <property type="term" value="F:phospholipid binding"/>
    <property type="evidence" value="ECO:0000314"/>
    <property type="project" value="TAIR"/>
</dbReference>
<dbReference type="GO" id="GO:0019725">
    <property type="term" value="P:cellular homeostasis"/>
    <property type="evidence" value="ECO:0000353"/>
    <property type="project" value="TAIR"/>
</dbReference>
<dbReference type="GO" id="GO:0006952">
    <property type="term" value="P:defense response"/>
    <property type="evidence" value="ECO:0007669"/>
    <property type="project" value="UniProtKB-KW"/>
</dbReference>
<dbReference type="GO" id="GO:0031348">
    <property type="term" value="P:negative regulation of defense response"/>
    <property type="evidence" value="ECO:0000315"/>
    <property type="project" value="TAIR"/>
</dbReference>
<dbReference type="GO" id="GO:0009409">
    <property type="term" value="P:response to cold"/>
    <property type="evidence" value="ECO:0000270"/>
    <property type="project" value="TAIR"/>
</dbReference>
<dbReference type="GO" id="GO:0009408">
    <property type="term" value="P:response to heat"/>
    <property type="evidence" value="ECO:0000270"/>
    <property type="project" value="TAIR"/>
</dbReference>
<dbReference type="GO" id="GO:0009751">
    <property type="term" value="P:response to salicylic acid"/>
    <property type="evidence" value="ECO:0000270"/>
    <property type="project" value="TAIR"/>
</dbReference>
<dbReference type="GO" id="GO:0009266">
    <property type="term" value="P:response to temperature stimulus"/>
    <property type="evidence" value="ECO:0000270"/>
    <property type="project" value="TAIR"/>
</dbReference>
<dbReference type="GO" id="GO:0009611">
    <property type="term" value="P:response to wounding"/>
    <property type="evidence" value="ECO:0000270"/>
    <property type="project" value="TAIR"/>
</dbReference>
<dbReference type="CDD" id="cd04051">
    <property type="entry name" value="C2_SRC2_like"/>
    <property type="match status" value="1"/>
</dbReference>
<dbReference type="FunFam" id="2.60.40.150:FF:000450">
    <property type="entry name" value="BON1-associated protein 1"/>
    <property type="match status" value="1"/>
</dbReference>
<dbReference type="Gene3D" id="2.60.40.150">
    <property type="entry name" value="C2 domain"/>
    <property type="match status" value="1"/>
</dbReference>
<dbReference type="InterPro" id="IPR000008">
    <property type="entry name" value="C2_dom"/>
</dbReference>
<dbReference type="InterPro" id="IPR035892">
    <property type="entry name" value="C2_domain_sf"/>
</dbReference>
<dbReference type="InterPro" id="IPR044750">
    <property type="entry name" value="C2_SRC2/BAP"/>
</dbReference>
<dbReference type="PANTHER" id="PTHR32246:SF134">
    <property type="entry name" value="BON1-ASSOCIATED PROTEIN 1"/>
    <property type="match status" value="1"/>
</dbReference>
<dbReference type="PANTHER" id="PTHR32246">
    <property type="entry name" value="INGRESSION PROTEIN FIC1"/>
    <property type="match status" value="1"/>
</dbReference>
<dbReference type="Pfam" id="PF00168">
    <property type="entry name" value="C2"/>
    <property type="match status" value="1"/>
</dbReference>
<dbReference type="SMART" id="SM00239">
    <property type="entry name" value="C2"/>
    <property type="match status" value="1"/>
</dbReference>
<dbReference type="SUPFAM" id="SSF49562">
    <property type="entry name" value="C2 domain (Calcium/lipid-binding domain, CaLB)"/>
    <property type="match status" value="1"/>
</dbReference>
<dbReference type="PROSITE" id="PS50004">
    <property type="entry name" value="C2"/>
    <property type="match status" value="1"/>
</dbReference>
<gene>
    <name type="primary">BAP1</name>
    <name type="ordered locus">At3g61190</name>
    <name type="ORF">T20K12.90</name>
</gene>
<reference key="1">
    <citation type="journal article" date="2001" name="Genes Dev.">
        <title>Plant growth homeostasis is controlled by the Arabidopsis BON1 and BAP1 genes.</title>
        <authorList>
            <person name="Hua J."/>
            <person name="Grisafi P."/>
            <person name="Cheng S.H."/>
            <person name="Fink G.R."/>
        </authorList>
    </citation>
    <scope>NUCLEOTIDE SEQUENCE [MRNA]</scope>
    <scope>INTERACTION WITH BON1</scope>
    <scope>TISSUE SPECIFICITY</scope>
    <scope>INDUCTION BY HEAT</scope>
    <source>
        <strain>cv. Columbia</strain>
    </source>
</reference>
<reference key="2">
    <citation type="journal article" date="2000" name="Nature">
        <title>Sequence and analysis of chromosome 3 of the plant Arabidopsis thaliana.</title>
        <authorList>
            <person name="Salanoubat M."/>
            <person name="Lemcke K."/>
            <person name="Rieger M."/>
            <person name="Ansorge W."/>
            <person name="Unseld M."/>
            <person name="Fartmann B."/>
            <person name="Valle G."/>
            <person name="Bloecker H."/>
            <person name="Perez-Alonso M."/>
            <person name="Obermaier B."/>
            <person name="Delseny M."/>
            <person name="Boutry M."/>
            <person name="Grivell L.A."/>
            <person name="Mache R."/>
            <person name="Puigdomenech P."/>
            <person name="De Simone V."/>
            <person name="Choisne N."/>
            <person name="Artiguenave F."/>
            <person name="Robert C."/>
            <person name="Brottier P."/>
            <person name="Wincker P."/>
            <person name="Cattolico L."/>
            <person name="Weissenbach J."/>
            <person name="Saurin W."/>
            <person name="Quetier F."/>
            <person name="Schaefer M."/>
            <person name="Mueller-Auer S."/>
            <person name="Gabel C."/>
            <person name="Fuchs M."/>
            <person name="Benes V."/>
            <person name="Wurmbach E."/>
            <person name="Drzonek H."/>
            <person name="Erfle H."/>
            <person name="Jordan N."/>
            <person name="Bangert S."/>
            <person name="Wiedelmann R."/>
            <person name="Kranz H."/>
            <person name="Voss H."/>
            <person name="Holland R."/>
            <person name="Brandt P."/>
            <person name="Nyakatura G."/>
            <person name="Vezzi A."/>
            <person name="D'Angelo M."/>
            <person name="Pallavicini A."/>
            <person name="Toppo S."/>
            <person name="Simionati B."/>
            <person name="Conrad A."/>
            <person name="Hornischer K."/>
            <person name="Kauer G."/>
            <person name="Loehnert T.-H."/>
            <person name="Nordsiek G."/>
            <person name="Reichelt J."/>
            <person name="Scharfe M."/>
            <person name="Schoen O."/>
            <person name="Bargues M."/>
            <person name="Terol J."/>
            <person name="Climent J."/>
            <person name="Navarro P."/>
            <person name="Collado C."/>
            <person name="Perez-Perez A."/>
            <person name="Ottenwaelder B."/>
            <person name="Duchemin D."/>
            <person name="Cooke R."/>
            <person name="Laudie M."/>
            <person name="Berger-Llauro C."/>
            <person name="Purnelle B."/>
            <person name="Masuy D."/>
            <person name="de Haan M."/>
            <person name="Maarse A.C."/>
            <person name="Alcaraz J.-P."/>
            <person name="Cottet A."/>
            <person name="Casacuberta E."/>
            <person name="Monfort A."/>
            <person name="Argiriou A."/>
            <person name="Flores M."/>
            <person name="Liguori R."/>
            <person name="Vitale D."/>
            <person name="Mannhaupt G."/>
            <person name="Haase D."/>
            <person name="Schoof H."/>
            <person name="Rudd S."/>
            <person name="Zaccaria P."/>
            <person name="Mewes H.-W."/>
            <person name="Mayer K.F.X."/>
            <person name="Kaul S."/>
            <person name="Town C.D."/>
            <person name="Koo H.L."/>
            <person name="Tallon L.J."/>
            <person name="Jenkins J."/>
            <person name="Rooney T."/>
            <person name="Rizzo M."/>
            <person name="Walts A."/>
            <person name="Utterback T."/>
            <person name="Fujii C.Y."/>
            <person name="Shea T.P."/>
            <person name="Creasy T.H."/>
            <person name="Haas B."/>
            <person name="Maiti R."/>
            <person name="Wu D."/>
            <person name="Peterson J."/>
            <person name="Van Aken S."/>
            <person name="Pai G."/>
            <person name="Militscher J."/>
            <person name="Sellers P."/>
            <person name="Gill J.E."/>
            <person name="Feldblyum T.V."/>
            <person name="Preuss D."/>
            <person name="Lin X."/>
            <person name="Nierman W.C."/>
            <person name="Salzberg S.L."/>
            <person name="White O."/>
            <person name="Venter J.C."/>
            <person name="Fraser C.M."/>
            <person name="Kaneko T."/>
            <person name="Nakamura Y."/>
            <person name="Sato S."/>
            <person name="Kato T."/>
            <person name="Asamizu E."/>
            <person name="Sasamoto S."/>
            <person name="Kimura T."/>
            <person name="Idesawa K."/>
            <person name="Kawashima K."/>
            <person name="Kishida Y."/>
            <person name="Kiyokawa C."/>
            <person name="Kohara M."/>
            <person name="Matsumoto M."/>
            <person name="Matsuno A."/>
            <person name="Muraki A."/>
            <person name="Nakayama S."/>
            <person name="Nakazaki N."/>
            <person name="Shinpo S."/>
            <person name="Takeuchi C."/>
            <person name="Wada T."/>
            <person name="Watanabe A."/>
            <person name="Yamada M."/>
            <person name="Yasuda M."/>
            <person name="Tabata S."/>
        </authorList>
    </citation>
    <scope>NUCLEOTIDE SEQUENCE [LARGE SCALE GENOMIC DNA]</scope>
    <source>
        <strain>cv. Columbia</strain>
    </source>
</reference>
<reference key="3">
    <citation type="journal article" date="2017" name="Plant J.">
        <title>Araport11: a complete reannotation of the Arabidopsis thaliana reference genome.</title>
        <authorList>
            <person name="Cheng C.Y."/>
            <person name="Krishnakumar V."/>
            <person name="Chan A.P."/>
            <person name="Thibaud-Nissen F."/>
            <person name="Schobel S."/>
            <person name="Town C.D."/>
        </authorList>
    </citation>
    <scope>GENOME REANNOTATION</scope>
    <source>
        <strain>cv. Columbia</strain>
    </source>
</reference>
<reference key="4">
    <citation type="journal article" date="2002" name="Science">
        <title>Functional annotation of a full-length Arabidopsis cDNA collection.</title>
        <authorList>
            <person name="Seki M."/>
            <person name="Narusaka M."/>
            <person name="Kamiya A."/>
            <person name="Ishida J."/>
            <person name="Satou M."/>
            <person name="Sakurai T."/>
            <person name="Nakajima M."/>
            <person name="Enju A."/>
            <person name="Akiyama K."/>
            <person name="Oono Y."/>
            <person name="Muramatsu M."/>
            <person name="Hayashizaki Y."/>
            <person name="Kawai J."/>
            <person name="Carninci P."/>
            <person name="Itoh M."/>
            <person name="Ishii Y."/>
            <person name="Arakawa T."/>
            <person name="Shibata K."/>
            <person name="Shinagawa A."/>
            <person name="Shinozaki K."/>
        </authorList>
    </citation>
    <scope>NUCLEOTIDE SEQUENCE [LARGE SCALE MRNA]</scope>
    <source>
        <strain>cv. Columbia</strain>
    </source>
</reference>
<reference key="5">
    <citation type="journal article" date="2003" name="Science">
        <title>Empirical analysis of transcriptional activity in the Arabidopsis genome.</title>
        <authorList>
            <person name="Yamada K."/>
            <person name="Lim J."/>
            <person name="Dale J.M."/>
            <person name="Chen H."/>
            <person name="Shinn P."/>
            <person name="Palm C.J."/>
            <person name="Southwick A.M."/>
            <person name="Wu H.C."/>
            <person name="Kim C.J."/>
            <person name="Nguyen M."/>
            <person name="Pham P.K."/>
            <person name="Cheuk R.F."/>
            <person name="Karlin-Newmann G."/>
            <person name="Liu S.X."/>
            <person name="Lam B."/>
            <person name="Sakano H."/>
            <person name="Wu T."/>
            <person name="Yu G."/>
            <person name="Miranda M."/>
            <person name="Quach H.L."/>
            <person name="Tripp M."/>
            <person name="Chang C.H."/>
            <person name="Lee J.M."/>
            <person name="Toriumi M.J."/>
            <person name="Chan M.M."/>
            <person name="Tang C.C."/>
            <person name="Onodera C.S."/>
            <person name="Deng J.M."/>
            <person name="Akiyama K."/>
            <person name="Ansari Y."/>
            <person name="Arakawa T."/>
            <person name="Banh J."/>
            <person name="Banno F."/>
            <person name="Bowser L."/>
            <person name="Brooks S.Y."/>
            <person name="Carninci P."/>
            <person name="Chao Q."/>
            <person name="Choy N."/>
            <person name="Enju A."/>
            <person name="Goldsmith A.D."/>
            <person name="Gurjal M."/>
            <person name="Hansen N.F."/>
            <person name="Hayashizaki Y."/>
            <person name="Johnson-Hopson C."/>
            <person name="Hsuan V.W."/>
            <person name="Iida K."/>
            <person name="Karnes M."/>
            <person name="Khan S."/>
            <person name="Koesema E."/>
            <person name="Ishida J."/>
            <person name="Jiang P.X."/>
            <person name="Jones T."/>
            <person name="Kawai J."/>
            <person name="Kamiya A."/>
            <person name="Meyers C."/>
            <person name="Nakajima M."/>
            <person name="Narusaka M."/>
            <person name="Seki M."/>
            <person name="Sakurai T."/>
            <person name="Satou M."/>
            <person name="Tamse R."/>
            <person name="Vaysberg M."/>
            <person name="Wallender E.K."/>
            <person name="Wong C."/>
            <person name="Yamamura Y."/>
            <person name="Yuan S."/>
            <person name="Shinozaki K."/>
            <person name="Davis R.W."/>
            <person name="Theologis A."/>
            <person name="Ecker J.R."/>
        </authorList>
    </citation>
    <scope>NUCLEOTIDE SEQUENCE [LARGE SCALE MRNA]</scope>
    <source>
        <strain>cv. Columbia</strain>
    </source>
</reference>
<reference key="6">
    <citation type="submission" date="2002-03" db="EMBL/GenBank/DDBJ databases">
        <title>Full-length cDNA from Arabidopsis thaliana.</title>
        <authorList>
            <person name="Brover V.V."/>
            <person name="Troukhan M.E."/>
            <person name="Alexandrov N.A."/>
            <person name="Lu Y.-P."/>
            <person name="Flavell R.B."/>
            <person name="Feldmann K.A."/>
        </authorList>
    </citation>
    <scope>NUCLEOTIDE SEQUENCE [LARGE SCALE MRNA]</scope>
</reference>
<reference key="7">
    <citation type="journal article" date="2006" name="Plant J.">
        <title>The C2 domain protein BAP1 negatively regulates defense responses in Arabidopsis.</title>
        <authorList>
            <person name="Yang H."/>
            <person name="Li Y."/>
            <person name="Hua J."/>
        </authorList>
    </citation>
    <scope>FUNCTION</scope>
    <scope>SUBCELLULAR LOCATION</scope>
    <scope>INTERACTION WITH BON1</scope>
    <scope>INDUCTION BY PATHOGEN AND SALICYLIC ACID</scope>
    <scope>DISRUPTION PHENOTYPE</scope>
</reference>
<reference key="8">
    <citation type="journal article" date="2007" name="Plant Physiol.">
        <title>The Arabidopsis BAP1 and BAP2 genes are general inhibitors of programmed cell death.</title>
        <authorList>
            <person name="Yang H."/>
            <person name="Yang S."/>
            <person name="Li Y."/>
            <person name="Hua J."/>
        </authorList>
    </citation>
    <scope>FUNCTION</scope>
    <scope>INDUCTION BY PATHOGEN; NEMATODE; CHEMICALS AND SALT STRESS</scope>
    <scope>INTERACTION WITH BON1; BON2 AND BON3</scope>
    <scope>DISRUPTION PHENOTYPE</scope>
</reference>
<reference key="9">
    <citation type="journal article" date="2010" name="J. Biol. Chem.">
        <title>Requirement of calcium binding, myristoylation, and protein-protein interaction for the copine BON1 function in Arabidopsis.</title>
        <authorList>
            <person name="Li Y."/>
            <person name="Gou M."/>
            <person name="Sun Q."/>
            <person name="Hua J."/>
        </authorList>
    </citation>
    <scope>INTERACTION WITH BON1</scope>
</reference>
<sequence>MIYFGRSIDNHYTTMMTKTLEIDLRSAEGLKLNRRPIKKKTFAVVKIDEKCRKSNLDESRRSNPTWNYKSEMPINGNEQFIFIEVFYRTGSGHDKKIGEAKIPTNDFMGRYSPEGHLNFLSYRLRDEFGDKCGIVNLSILVKSDPTRDYGACSSQAAVTGLWRPRLETASIDGYGGRTVTGVPVWGLYQRQF</sequence>